<name>BIOB_MARSD</name>
<proteinExistence type="inferred from homology"/>
<organism>
    <name type="scientific">Maridesulfovibrio salexigens (strain ATCC 14822 / DSM 2638 / NCIMB 8403 / VKM B-1763)</name>
    <name type="common">Desulfovibrio salexigens</name>
    <dbReference type="NCBI Taxonomy" id="526222"/>
    <lineage>
        <taxon>Bacteria</taxon>
        <taxon>Pseudomonadati</taxon>
        <taxon>Thermodesulfobacteriota</taxon>
        <taxon>Desulfovibrionia</taxon>
        <taxon>Desulfovibrionales</taxon>
        <taxon>Desulfovibrionaceae</taxon>
        <taxon>Maridesulfovibrio</taxon>
    </lineage>
</organism>
<accession>C6C0T2</accession>
<evidence type="ECO:0000255" key="1">
    <source>
        <dbReference type="HAMAP-Rule" id="MF_01694"/>
    </source>
</evidence>
<evidence type="ECO:0000255" key="2">
    <source>
        <dbReference type="PROSITE-ProRule" id="PRU01266"/>
    </source>
</evidence>
<protein>
    <recommendedName>
        <fullName evidence="1">Biotin synthase</fullName>
        <ecNumber evidence="1">2.8.1.6</ecNumber>
    </recommendedName>
</protein>
<feature type="chain" id="PRO_1000215934" description="Biotin synthase">
    <location>
        <begin position="1"/>
        <end position="327"/>
    </location>
</feature>
<feature type="domain" description="Radical SAM core" evidence="2">
    <location>
        <begin position="49"/>
        <end position="275"/>
    </location>
</feature>
<feature type="binding site" evidence="1">
    <location>
        <position position="67"/>
    </location>
    <ligand>
        <name>[4Fe-4S] cluster</name>
        <dbReference type="ChEBI" id="CHEBI:49883"/>
        <note>4Fe-4S-S-AdoMet</note>
    </ligand>
</feature>
<feature type="binding site" evidence="1">
    <location>
        <position position="71"/>
    </location>
    <ligand>
        <name>[4Fe-4S] cluster</name>
        <dbReference type="ChEBI" id="CHEBI:49883"/>
        <note>4Fe-4S-S-AdoMet</note>
    </ligand>
</feature>
<feature type="binding site" evidence="1">
    <location>
        <position position="74"/>
    </location>
    <ligand>
        <name>[4Fe-4S] cluster</name>
        <dbReference type="ChEBI" id="CHEBI:49883"/>
        <note>4Fe-4S-S-AdoMet</note>
    </ligand>
</feature>
<feature type="binding site" evidence="1">
    <location>
        <position position="112"/>
    </location>
    <ligand>
        <name>[2Fe-2S] cluster</name>
        <dbReference type="ChEBI" id="CHEBI:190135"/>
    </ligand>
</feature>
<feature type="binding site" evidence="1">
    <location>
        <position position="143"/>
    </location>
    <ligand>
        <name>[2Fe-2S] cluster</name>
        <dbReference type="ChEBI" id="CHEBI:190135"/>
    </ligand>
</feature>
<feature type="binding site" evidence="1">
    <location>
        <position position="203"/>
    </location>
    <ligand>
        <name>[2Fe-2S] cluster</name>
        <dbReference type="ChEBI" id="CHEBI:190135"/>
    </ligand>
</feature>
<feature type="binding site" evidence="1">
    <location>
        <position position="273"/>
    </location>
    <ligand>
        <name>[2Fe-2S] cluster</name>
        <dbReference type="ChEBI" id="CHEBI:190135"/>
    </ligand>
</feature>
<sequence>MDRNEKQALWNAVHGGGAIDEHTAVSVLGASHGELAEILHAAHTMTMRRFGREVSLCSIANVRSGNCSEDCTFCAQSSHFKGTPAPAYPLMSVEEIRDCAEKAGQSPLEFFSYVTSGRALKGKSLDHVCEAVDGMRERSFNHCASLGCLDFESLKKLHESGVVRYHHNLEAAESYFPNVCTTHSYEERVRTVRDAKKAGLEVCCGGLLGLGESHQQRVELALALAELEVDSIPLNFLIPIPGTPLENVEPLQPLEILLTIAMFRLVNPHAEVRMAAGRAALRSLQSFIFHAGCNGLMVGDFLTVSGQGIDHDLTMLEDLGLTVRTKK</sequence>
<comment type="function">
    <text evidence="1">Catalyzes the conversion of dethiobiotin (DTB) to biotin by the insertion of a sulfur atom into dethiobiotin via a radical-based mechanism.</text>
</comment>
<comment type="catalytic activity">
    <reaction evidence="1">
        <text>(4R,5S)-dethiobiotin + (sulfur carrier)-SH + 2 reduced [2Fe-2S]-[ferredoxin] + 2 S-adenosyl-L-methionine = (sulfur carrier)-H + biotin + 2 5'-deoxyadenosine + 2 L-methionine + 2 oxidized [2Fe-2S]-[ferredoxin]</text>
        <dbReference type="Rhea" id="RHEA:22060"/>
        <dbReference type="Rhea" id="RHEA-COMP:10000"/>
        <dbReference type="Rhea" id="RHEA-COMP:10001"/>
        <dbReference type="Rhea" id="RHEA-COMP:14737"/>
        <dbReference type="Rhea" id="RHEA-COMP:14739"/>
        <dbReference type="ChEBI" id="CHEBI:17319"/>
        <dbReference type="ChEBI" id="CHEBI:29917"/>
        <dbReference type="ChEBI" id="CHEBI:33737"/>
        <dbReference type="ChEBI" id="CHEBI:33738"/>
        <dbReference type="ChEBI" id="CHEBI:57586"/>
        <dbReference type="ChEBI" id="CHEBI:57844"/>
        <dbReference type="ChEBI" id="CHEBI:59789"/>
        <dbReference type="ChEBI" id="CHEBI:64428"/>
        <dbReference type="ChEBI" id="CHEBI:149473"/>
        <dbReference type="EC" id="2.8.1.6"/>
    </reaction>
</comment>
<comment type="cofactor">
    <cofactor evidence="1">
        <name>[4Fe-4S] cluster</name>
        <dbReference type="ChEBI" id="CHEBI:49883"/>
    </cofactor>
    <text evidence="1">Binds 1 [4Fe-4S] cluster. The cluster is coordinated with 3 cysteines and an exchangeable S-adenosyl-L-methionine.</text>
</comment>
<comment type="cofactor">
    <cofactor evidence="1">
        <name>[2Fe-2S] cluster</name>
        <dbReference type="ChEBI" id="CHEBI:190135"/>
    </cofactor>
    <text evidence="1">Binds 1 [2Fe-2S] cluster. The cluster is coordinated with 3 cysteines and 1 arginine.</text>
</comment>
<comment type="pathway">
    <text evidence="1">Cofactor biosynthesis; biotin biosynthesis; biotin from 7,8-diaminononanoate: step 2/2.</text>
</comment>
<comment type="subunit">
    <text evidence="1">Homodimer.</text>
</comment>
<comment type="similarity">
    <text evidence="1">Belongs to the radical SAM superfamily. Biotin synthase family.</text>
</comment>
<reference key="1">
    <citation type="submission" date="2009-06" db="EMBL/GenBank/DDBJ databases">
        <title>Complete sequence of Desulfovibrio salexigens DSM 2638.</title>
        <authorList>
            <consortium name="US DOE Joint Genome Institute"/>
            <person name="Lucas S."/>
            <person name="Copeland A."/>
            <person name="Lapidus A."/>
            <person name="Glavina del Rio T."/>
            <person name="Tice H."/>
            <person name="Bruce D."/>
            <person name="Goodwin L."/>
            <person name="Pitluck S."/>
            <person name="Munk A.C."/>
            <person name="Brettin T."/>
            <person name="Detter J.C."/>
            <person name="Han C."/>
            <person name="Tapia R."/>
            <person name="Larimer F."/>
            <person name="Land M."/>
            <person name="Hauser L."/>
            <person name="Kyrpides N."/>
            <person name="Anderson I."/>
            <person name="Wall J.D."/>
            <person name="Arkin A.P."/>
            <person name="Dehal P."/>
            <person name="Chivian D."/>
            <person name="Giles B."/>
            <person name="Hazen T.C."/>
        </authorList>
    </citation>
    <scope>NUCLEOTIDE SEQUENCE [LARGE SCALE GENOMIC DNA]</scope>
    <source>
        <strain>ATCC 14822 / DSM 2638 / NCIMB 8403 / VKM B-1763</strain>
    </source>
</reference>
<dbReference type="EC" id="2.8.1.6" evidence="1"/>
<dbReference type="EMBL" id="CP001649">
    <property type="protein sequence ID" value="ACS81029.1"/>
    <property type="molecule type" value="Genomic_DNA"/>
</dbReference>
<dbReference type="RefSeq" id="WP_015852845.1">
    <property type="nucleotide sequence ID" value="NC_012881.1"/>
</dbReference>
<dbReference type="SMR" id="C6C0T2"/>
<dbReference type="STRING" id="526222.Desal_2977"/>
<dbReference type="KEGG" id="dsa:Desal_2977"/>
<dbReference type="eggNOG" id="COG0502">
    <property type="taxonomic scope" value="Bacteria"/>
</dbReference>
<dbReference type="HOGENOM" id="CLU_033172_2_1_7"/>
<dbReference type="OrthoDB" id="9786826at2"/>
<dbReference type="UniPathway" id="UPA00078">
    <property type="reaction ID" value="UER00162"/>
</dbReference>
<dbReference type="Proteomes" id="UP000002601">
    <property type="component" value="Chromosome"/>
</dbReference>
<dbReference type="GO" id="GO:0051537">
    <property type="term" value="F:2 iron, 2 sulfur cluster binding"/>
    <property type="evidence" value="ECO:0007669"/>
    <property type="project" value="UniProtKB-KW"/>
</dbReference>
<dbReference type="GO" id="GO:0051539">
    <property type="term" value="F:4 iron, 4 sulfur cluster binding"/>
    <property type="evidence" value="ECO:0007669"/>
    <property type="project" value="UniProtKB-KW"/>
</dbReference>
<dbReference type="GO" id="GO:0004076">
    <property type="term" value="F:biotin synthase activity"/>
    <property type="evidence" value="ECO:0007669"/>
    <property type="project" value="UniProtKB-UniRule"/>
</dbReference>
<dbReference type="GO" id="GO:0005506">
    <property type="term" value="F:iron ion binding"/>
    <property type="evidence" value="ECO:0007669"/>
    <property type="project" value="UniProtKB-UniRule"/>
</dbReference>
<dbReference type="GO" id="GO:0009102">
    <property type="term" value="P:biotin biosynthetic process"/>
    <property type="evidence" value="ECO:0007669"/>
    <property type="project" value="UniProtKB-UniRule"/>
</dbReference>
<dbReference type="CDD" id="cd01335">
    <property type="entry name" value="Radical_SAM"/>
    <property type="match status" value="1"/>
</dbReference>
<dbReference type="Gene3D" id="3.20.20.70">
    <property type="entry name" value="Aldolase class I"/>
    <property type="match status" value="1"/>
</dbReference>
<dbReference type="HAMAP" id="MF_01694">
    <property type="entry name" value="BioB"/>
    <property type="match status" value="1"/>
</dbReference>
<dbReference type="InterPro" id="IPR013785">
    <property type="entry name" value="Aldolase_TIM"/>
</dbReference>
<dbReference type="InterPro" id="IPR010722">
    <property type="entry name" value="BATS_dom"/>
</dbReference>
<dbReference type="InterPro" id="IPR002684">
    <property type="entry name" value="Biotin_synth/BioAB"/>
</dbReference>
<dbReference type="InterPro" id="IPR024177">
    <property type="entry name" value="Biotin_synthase"/>
</dbReference>
<dbReference type="InterPro" id="IPR006638">
    <property type="entry name" value="Elp3/MiaA/NifB-like_rSAM"/>
</dbReference>
<dbReference type="InterPro" id="IPR007197">
    <property type="entry name" value="rSAM"/>
</dbReference>
<dbReference type="NCBIfam" id="TIGR00433">
    <property type="entry name" value="bioB"/>
    <property type="match status" value="1"/>
</dbReference>
<dbReference type="PANTHER" id="PTHR22976">
    <property type="entry name" value="BIOTIN SYNTHASE"/>
    <property type="match status" value="1"/>
</dbReference>
<dbReference type="PANTHER" id="PTHR22976:SF2">
    <property type="entry name" value="BIOTIN SYNTHASE, MITOCHONDRIAL"/>
    <property type="match status" value="1"/>
</dbReference>
<dbReference type="Pfam" id="PF06968">
    <property type="entry name" value="BATS"/>
    <property type="match status" value="1"/>
</dbReference>
<dbReference type="Pfam" id="PF04055">
    <property type="entry name" value="Radical_SAM"/>
    <property type="match status" value="1"/>
</dbReference>
<dbReference type="PIRSF" id="PIRSF001619">
    <property type="entry name" value="Biotin_synth"/>
    <property type="match status" value="1"/>
</dbReference>
<dbReference type="SFLD" id="SFLDG01278">
    <property type="entry name" value="biotin_synthase_like"/>
    <property type="match status" value="1"/>
</dbReference>
<dbReference type="SFLD" id="SFLDS00029">
    <property type="entry name" value="Radical_SAM"/>
    <property type="match status" value="1"/>
</dbReference>
<dbReference type="SMART" id="SM00876">
    <property type="entry name" value="BATS"/>
    <property type="match status" value="1"/>
</dbReference>
<dbReference type="SMART" id="SM00729">
    <property type="entry name" value="Elp3"/>
    <property type="match status" value="1"/>
</dbReference>
<dbReference type="SUPFAM" id="SSF102114">
    <property type="entry name" value="Radical SAM enzymes"/>
    <property type="match status" value="1"/>
</dbReference>
<dbReference type="PROSITE" id="PS51918">
    <property type="entry name" value="RADICAL_SAM"/>
    <property type="match status" value="1"/>
</dbReference>
<keyword id="KW-0001">2Fe-2S</keyword>
<keyword id="KW-0004">4Fe-4S</keyword>
<keyword id="KW-0093">Biotin biosynthesis</keyword>
<keyword id="KW-0408">Iron</keyword>
<keyword id="KW-0411">Iron-sulfur</keyword>
<keyword id="KW-0479">Metal-binding</keyword>
<keyword id="KW-1185">Reference proteome</keyword>
<keyword id="KW-0949">S-adenosyl-L-methionine</keyword>
<keyword id="KW-0808">Transferase</keyword>
<gene>
    <name evidence="1" type="primary">bioB</name>
    <name type="ordered locus">Desal_2977</name>
</gene>